<reference key="1">
    <citation type="journal article" date="2006" name="Mol. Genet. Genomics">
        <title>Distinctive architecture of the chloroplast genome in the chlorophycean green alga Stigeoclonium helveticum.</title>
        <authorList>
            <person name="Belanger A.-S."/>
            <person name="Brouard J.-S."/>
            <person name="Charlebois P."/>
            <person name="Otis C."/>
            <person name="Lemieux C."/>
            <person name="Turmel M."/>
        </authorList>
    </citation>
    <scope>NUCLEOTIDE SEQUENCE [LARGE SCALE GENOMIC DNA]</scope>
    <source>
        <strain>UTEX 441</strain>
    </source>
</reference>
<gene>
    <name evidence="1" type="primary">ycf4</name>
</gene>
<geneLocation type="chloroplast"/>
<feature type="chain" id="PRO_0000275676" description="Photosystem I assembly protein Ycf4">
    <location>
        <begin position="1"/>
        <end position="183"/>
    </location>
</feature>
<feature type="transmembrane region" description="Helical" evidence="1">
    <location>
        <begin position="23"/>
        <end position="43"/>
    </location>
</feature>
<feature type="transmembrane region" description="Helical" evidence="1">
    <location>
        <begin position="64"/>
        <end position="84"/>
    </location>
</feature>
<comment type="function">
    <text evidence="1">Seems to be required for the assembly of the photosystem I complex.</text>
</comment>
<comment type="subcellular location">
    <subcellularLocation>
        <location evidence="1">Plastid</location>
        <location evidence="1">Chloroplast thylakoid membrane</location>
        <topology evidence="1">Multi-pass membrane protein</topology>
    </subcellularLocation>
</comment>
<comment type="similarity">
    <text evidence="1">Belongs to the Ycf4 family.</text>
</comment>
<name>YCF4_STIHE</name>
<dbReference type="EMBL" id="DQ630521">
    <property type="protein sequence ID" value="ABF60205.1"/>
    <property type="molecule type" value="Genomic_DNA"/>
</dbReference>
<dbReference type="RefSeq" id="YP_764408.1">
    <property type="nucleotide sequence ID" value="NC_008372.1"/>
</dbReference>
<dbReference type="GeneID" id="4308436"/>
<dbReference type="GO" id="GO:0009535">
    <property type="term" value="C:chloroplast thylakoid membrane"/>
    <property type="evidence" value="ECO:0007669"/>
    <property type="project" value="UniProtKB-SubCell"/>
</dbReference>
<dbReference type="GO" id="GO:0009522">
    <property type="term" value="C:photosystem I"/>
    <property type="evidence" value="ECO:0007669"/>
    <property type="project" value="InterPro"/>
</dbReference>
<dbReference type="GO" id="GO:0015979">
    <property type="term" value="P:photosynthesis"/>
    <property type="evidence" value="ECO:0007669"/>
    <property type="project" value="UniProtKB-UniRule"/>
</dbReference>
<dbReference type="HAMAP" id="MF_00437">
    <property type="entry name" value="Ycf4"/>
    <property type="match status" value="1"/>
</dbReference>
<dbReference type="InterPro" id="IPR003359">
    <property type="entry name" value="PSI_Ycf4_assembly"/>
</dbReference>
<dbReference type="NCBIfam" id="NF002712">
    <property type="entry name" value="PRK02542.1"/>
    <property type="match status" value="1"/>
</dbReference>
<dbReference type="PANTHER" id="PTHR33288">
    <property type="match status" value="1"/>
</dbReference>
<dbReference type="PANTHER" id="PTHR33288:SF4">
    <property type="entry name" value="PHOTOSYSTEM I ASSEMBLY PROTEIN YCF4"/>
    <property type="match status" value="1"/>
</dbReference>
<dbReference type="Pfam" id="PF02392">
    <property type="entry name" value="Ycf4"/>
    <property type="match status" value="1"/>
</dbReference>
<organism>
    <name type="scientific">Stigeoclonium helveticum</name>
    <name type="common">Green alga</name>
    <dbReference type="NCBI Taxonomy" id="55999"/>
    <lineage>
        <taxon>Eukaryota</taxon>
        <taxon>Viridiplantae</taxon>
        <taxon>Chlorophyta</taxon>
        <taxon>core chlorophytes</taxon>
        <taxon>Chlorophyceae</taxon>
        <taxon>OCC clade</taxon>
        <taxon>Chaetophorales</taxon>
        <taxon>Chaetophoraceae</taxon>
        <taxon>Stigeoclonium</taxon>
    </lineage>
</organism>
<keyword id="KW-0150">Chloroplast</keyword>
<keyword id="KW-0472">Membrane</keyword>
<keyword id="KW-0602">Photosynthesis</keyword>
<keyword id="KW-0934">Plastid</keyword>
<keyword id="KW-0793">Thylakoid</keyword>
<keyword id="KW-0812">Transmembrane</keyword>
<keyword id="KW-1133">Transmembrane helix</keyword>
<protein>
    <recommendedName>
        <fullName evidence="1">Photosystem I assembly protein Ycf4</fullName>
    </recommendedName>
</protein>
<accession>Q06SF8</accession>
<proteinExistence type="inferred from homology"/>
<evidence type="ECO:0000255" key="1">
    <source>
        <dbReference type="HAMAP-Rule" id="MF_00437"/>
    </source>
</evidence>
<sequence>MNSENLIRRYVITGSRRLSNYWWASVVFLGAIGFLFTGLSSYFGQNLLPFLQVQNITFFPQGLVMSFYGILGLLLSIYLWLTIIWNVGGGFNEFNKKAGAIRIFRWGFPGKTRCIDISYSLKEVEAIKVDFKQGVNPQRTLYLRVKGKREIPLSQIGQPLTVEEVEKQAAELAKFLQVSVEGL</sequence>